<protein>
    <recommendedName>
        <fullName>Protein FAM171A1</fullName>
    </recommendedName>
</protein>
<feature type="signal peptide" evidence="2">
    <location>
        <begin position="1"/>
        <end position="21"/>
    </location>
</feature>
<feature type="chain" id="PRO_0000274264" description="Protein FAM171A1">
    <location>
        <begin position="22"/>
        <end position="890"/>
    </location>
</feature>
<feature type="topological domain" description="Extracellular" evidence="2">
    <location>
        <begin position="22"/>
        <end position="303"/>
    </location>
</feature>
<feature type="transmembrane region" description="Helical" evidence="2">
    <location>
        <begin position="304"/>
        <end position="324"/>
    </location>
</feature>
<feature type="topological domain" description="Cytoplasmic" evidence="2">
    <location>
        <begin position="325"/>
        <end position="890"/>
    </location>
</feature>
<feature type="region of interest" description="Disordered" evidence="3">
    <location>
        <begin position="730"/>
        <end position="759"/>
    </location>
</feature>
<feature type="region of interest" description="Disordered" evidence="3">
    <location>
        <begin position="818"/>
        <end position="890"/>
    </location>
</feature>
<feature type="compositionally biased region" description="Basic and acidic residues" evidence="3">
    <location>
        <begin position="747"/>
        <end position="757"/>
    </location>
</feature>
<feature type="compositionally biased region" description="Polar residues" evidence="3">
    <location>
        <begin position="822"/>
        <end position="833"/>
    </location>
</feature>
<feature type="compositionally biased region" description="Acidic residues" evidence="3">
    <location>
        <begin position="858"/>
        <end position="869"/>
    </location>
</feature>
<feature type="compositionally biased region" description="Basic and acidic residues" evidence="3">
    <location>
        <begin position="870"/>
        <end position="883"/>
    </location>
</feature>
<feature type="modified residue" description="Phosphoserine" evidence="1">
    <location>
        <position position="358"/>
    </location>
</feature>
<feature type="modified residue" description="Phosphoserine" evidence="1">
    <location>
        <position position="360"/>
    </location>
</feature>
<feature type="modified residue" description="Phosphoserine" evidence="1">
    <location>
        <position position="371"/>
    </location>
</feature>
<feature type="modified residue" description="Phosphoserine" evidence="1">
    <location>
        <position position="422"/>
    </location>
</feature>
<feature type="modified residue" description="Phosphoserine" evidence="1">
    <location>
        <position position="443"/>
    </location>
</feature>
<feature type="modified residue" description="Phosphoserine" evidence="1">
    <location>
        <position position="525"/>
    </location>
</feature>
<feature type="modified residue" description="Phosphoserine" evidence="1">
    <location>
        <position position="849"/>
    </location>
</feature>
<feature type="modified residue" description="Phosphoserine" evidence="1">
    <location>
        <position position="855"/>
    </location>
</feature>
<feature type="glycosylation site" description="N-linked (GlcNAc...) asparagine" evidence="2">
    <location>
        <position position="190"/>
    </location>
</feature>
<feature type="glycosylation site" description="N-linked (GlcNAc...) asparagine" evidence="2">
    <location>
        <position position="194"/>
    </location>
</feature>
<organism>
    <name type="scientific">Pongo abelii</name>
    <name type="common">Sumatran orangutan</name>
    <name type="synonym">Pongo pygmaeus abelii</name>
    <dbReference type="NCBI Taxonomy" id="9601"/>
    <lineage>
        <taxon>Eukaryota</taxon>
        <taxon>Metazoa</taxon>
        <taxon>Chordata</taxon>
        <taxon>Craniata</taxon>
        <taxon>Vertebrata</taxon>
        <taxon>Euteleostomi</taxon>
        <taxon>Mammalia</taxon>
        <taxon>Eutheria</taxon>
        <taxon>Euarchontoglires</taxon>
        <taxon>Primates</taxon>
        <taxon>Haplorrhini</taxon>
        <taxon>Catarrhini</taxon>
        <taxon>Hominidae</taxon>
        <taxon>Pongo</taxon>
    </lineage>
</organism>
<sequence length="890" mass="97971">MSRSAALLLCLLGCHVWKAVTKTLREPGAGAQEVTLKVHISDASTHQPVADALIEIFTNQASIASGTSGTDGVAFIKFQYKLGSQLIVTASKHAYVPNSAPWKPIRLPVFSSLSLGLLPERSATLMVYEDVVQIVSGFQGARPQPRVHFQRRALRLPENTSYSDLTAFLTAASSPSEVDSFPYLRGLDGNGTGNSTRHDLTPVTAVSVHLLSSNGTPVLVDGPIYVTVPLATQSSLRHNAYVTAWRFDQKLGTWLKSGLGLVHQEGSQLTWTYIAPQLGYWVAAMSPPIPGPVVTQDITTYHTVFLLAILGGMAFILLVLLCLLLYYCRRKCMKPRQHHRKLQLPAGLESSKRDQSTSMSHINLLFSRRASEFPGPLSVTSHGRPEAPGTKELMSGVHLEMMSPGGEGDLHTPMLKLSYSTSQEFSSREELLSCKEEDKSQISFDNLTPSGTLRKDYHKSVEVFPLKARKSMEREGYESSGNDDYRGSYNTVLSQPLFEKQDREGPASTGSKLTIQEHLYPAPSSPEKEQLLDRRPTECMMSRSVDHLERPTSFPQPGQLICCSSVDQVNDSVYRKVLPALVIPAHYMKLPGDHSYVSQPLVVPADQQLEIERLQAELSNPHAGIFPHPSSQIQPQPLSSQAISQQHLQDAGTREWSPQNASMSESLSIPASLNDAALAQMNSEVQLLTEKALMELGGGKPLPHPRAWFVSLDGRSNAHVRHSYIDLQRAGRNGSNDASLDSGVDMNEPKSARKGRGDALSLQQNYPPVQEHQQKEPRAPDSTAYTQLVYLDDVEQSGSECGTTVCTPEDSALRCLLEGSSRRSGGQLPSLQEETTRRTADAPSEPAVSPHQRRSAHEEEEDDDDDDQGEDKKSPWQKREERPLMAFNIK</sequence>
<accession>Q5RD34</accession>
<dbReference type="EMBL" id="CR858084">
    <property type="protein sequence ID" value="CAH90323.1"/>
    <property type="molecule type" value="mRNA"/>
</dbReference>
<dbReference type="RefSeq" id="NP_001125149.1">
    <property type="nucleotide sequence ID" value="NM_001131677.2"/>
</dbReference>
<dbReference type="FunCoup" id="Q5RD34">
    <property type="interactions" value="946"/>
</dbReference>
<dbReference type="STRING" id="9601.ENSPPYP00000002452"/>
<dbReference type="GlyCosmos" id="Q5RD34">
    <property type="glycosylation" value="2 sites, No reported glycans"/>
</dbReference>
<dbReference type="GeneID" id="100172036"/>
<dbReference type="KEGG" id="pon:100172036"/>
<dbReference type="CTD" id="221061"/>
<dbReference type="eggNOG" id="ENOG502QR89">
    <property type="taxonomic scope" value="Eukaryota"/>
</dbReference>
<dbReference type="InParanoid" id="Q5RD34"/>
<dbReference type="OrthoDB" id="8762914at2759"/>
<dbReference type="Proteomes" id="UP000001595">
    <property type="component" value="Unplaced"/>
</dbReference>
<dbReference type="GO" id="GO:0005886">
    <property type="term" value="C:plasma membrane"/>
    <property type="evidence" value="ECO:0000250"/>
    <property type="project" value="UniProtKB"/>
</dbReference>
<dbReference type="GO" id="GO:0008360">
    <property type="term" value="P:regulation of cell shape"/>
    <property type="evidence" value="ECO:0000250"/>
    <property type="project" value="UniProtKB"/>
</dbReference>
<dbReference type="GO" id="GO:0043149">
    <property type="term" value="P:stress fiber assembly"/>
    <property type="evidence" value="ECO:0000250"/>
    <property type="project" value="UniProtKB"/>
</dbReference>
<dbReference type="InterPro" id="IPR018890">
    <property type="entry name" value="FAM171"/>
</dbReference>
<dbReference type="InterPro" id="IPR049175">
    <property type="entry name" value="FAM171_C"/>
</dbReference>
<dbReference type="InterPro" id="IPR048530">
    <property type="entry name" value="FAM171_N"/>
</dbReference>
<dbReference type="PANTHER" id="PTHR31626:SF1">
    <property type="entry name" value="PROTEIN FAM171A1"/>
    <property type="match status" value="1"/>
</dbReference>
<dbReference type="PANTHER" id="PTHR31626">
    <property type="entry name" value="SUSHI DOMAIN-CONTAINING PROTEIN"/>
    <property type="match status" value="1"/>
</dbReference>
<dbReference type="Pfam" id="PF20771">
    <property type="entry name" value="FAM171A1-2-B_C"/>
    <property type="match status" value="1"/>
</dbReference>
<dbReference type="Pfam" id="PF10577">
    <property type="entry name" value="FAM171A1-2-B_N"/>
    <property type="match status" value="1"/>
</dbReference>
<reference key="1">
    <citation type="submission" date="2004-11" db="EMBL/GenBank/DDBJ databases">
        <authorList>
            <consortium name="The German cDNA consortium"/>
        </authorList>
    </citation>
    <scope>NUCLEOTIDE SEQUENCE [LARGE SCALE MRNA]</scope>
    <source>
        <tissue>Brain cortex</tissue>
    </source>
</reference>
<keyword id="KW-1003">Cell membrane</keyword>
<keyword id="KW-0325">Glycoprotein</keyword>
<keyword id="KW-0472">Membrane</keyword>
<keyword id="KW-0597">Phosphoprotein</keyword>
<keyword id="KW-1185">Reference proteome</keyword>
<keyword id="KW-0732">Signal</keyword>
<keyword id="KW-0812">Transmembrane</keyword>
<keyword id="KW-1133">Transmembrane helix</keyword>
<evidence type="ECO:0000250" key="1">
    <source>
        <dbReference type="UniProtKB" id="Q5VUB5"/>
    </source>
</evidence>
<evidence type="ECO:0000255" key="2"/>
<evidence type="ECO:0000256" key="3">
    <source>
        <dbReference type="SAM" id="MobiDB-lite"/>
    </source>
</evidence>
<evidence type="ECO:0000305" key="4"/>
<proteinExistence type="evidence at transcript level"/>
<name>F1711_PONAB</name>
<gene>
    <name type="primary">FAM171A1</name>
</gene>
<comment type="function">
    <text evidence="1">Involved in the regulation of the cytoskeletal dynamics, plays a role in actin stress fiber formation.</text>
</comment>
<comment type="subunit">
    <text evidence="1">Interacts with ADAM10, NSG1 and OAZ1.</text>
</comment>
<comment type="subcellular location">
    <subcellularLocation>
        <location evidence="1">Cell membrane</location>
        <topology evidence="1">Single-pass type I membrane protein</topology>
    </subcellularLocation>
</comment>
<comment type="similarity">
    <text evidence="4">Belongs to the FAM171 family.</text>
</comment>